<evidence type="ECO:0000250" key="1"/>
<evidence type="ECO:0000255" key="2">
    <source>
        <dbReference type="HAMAP-Rule" id="MF_01676"/>
    </source>
</evidence>
<keyword id="KW-0049">Antioxidant</keyword>
<keyword id="KW-1015">Disulfide bond</keyword>
<keyword id="KW-0560">Oxidoreductase</keyword>
<keyword id="KW-0575">Peroxidase</keyword>
<keyword id="KW-0676">Redox-active center</keyword>
<name>AHPD_BRUSI</name>
<organism>
    <name type="scientific">Brucella suis (strain ATCC 23445 / NCTC 10510)</name>
    <dbReference type="NCBI Taxonomy" id="470137"/>
    <lineage>
        <taxon>Bacteria</taxon>
        <taxon>Pseudomonadati</taxon>
        <taxon>Pseudomonadota</taxon>
        <taxon>Alphaproteobacteria</taxon>
        <taxon>Hyphomicrobiales</taxon>
        <taxon>Brucellaceae</taxon>
        <taxon>Brucella/Ochrobactrum group</taxon>
        <taxon>Brucella</taxon>
    </lineage>
</organism>
<proteinExistence type="inferred from homology"/>
<comment type="function">
    <text evidence="2">Antioxidant protein with alkyl hydroperoxidase activity. Required for the reduction of the AhpC active site cysteine residues and for the regeneration of the AhpC enzyme activity.</text>
</comment>
<comment type="catalytic activity">
    <reaction evidence="2">
        <text>N(6)-[(R)-dihydrolipoyl]-L-lysyl-[lipoyl-carrier protein] + a hydroperoxide = N(6)-[(R)-lipoyl]-L-lysyl-[lipoyl-carrier protein] + an alcohol + H2O</text>
        <dbReference type="Rhea" id="RHEA:62636"/>
        <dbReference type="Rhea" id="RHEA-COMP:10502"/>
        <dbReference type="Rhea" id="RHEA-COMP:16355"/>
        <dbReference type="ChEBI" id="CHEBI:15377"/>
        <dbReference type="ChEBI" id="CHEBI:30879"/>
        <dbReference type="ChEBI" id="CHEBI:35924"/>
        <dbReference type="ChEBI" id="CHEBI:83099"/>
        <dbReference type="ChEBI" id="CHEBI:83100"/>
        <dbReference type="EC" id="1.11.1.28"/>
    </reaction>
</comment>
<comment type="similarity">
    <text evidence="2">Belongs to the AhpD family.</text>
</comment>
<accession>A9WZ04</accession>
<feature type="chain" id="PRO_0000359482" description="Alkyl hydroperoxide reductase AhpD">
    <location>
        <begin position="1"/>
        <end position="175"/>
    </location>
</feature>
<feature type="active site" description="Proton donor" evidence="2">
    <location>
        <position position="131"/>
    </location>
</feature>
<feature type="active site" description="Cysteine sulfenic acid (-SOH) intermediate" evidence="2">
    <location>
        <position position="134"/>
    </location>
</feature>
<feature type="disulfide bond" evidence="1">
    <location>
        <begin position="131"/>
        <end position="134"/>
    </location>
</feature>
<feature type="disulfide bond" description="Interchain (with AhpC); in linked form" evidence="2">
    <location>
        <position position="134"/>
    </location>
</feature>
<gene>
    <name evidence="2" type="primary">ahpD</name>
    <name type="ordered locus">BSUIS_B0693</name>
</gene>
<reference key="1">
    <citation type="submission" date="2007-12" db="EMBL/GenBank/DDBJ databases">
        <title>Brucella suis ATCC 23445 whole genome shotgun sequencing project.</title>
        <authorList>
            <person name="Setubal J.C."/>
            <person name="Bowns C."/>
            <person name="Boyle S."/>
            <person name="Crasta O.R."/>
            <person name="Czar M.J."/>
            <person name="Dharmanolla C."/>
            <person name="Gillespie J.J."/>
            <person name="Kenyon R.W."/>
            <person name="Lu J."/>
            <person name="Mane S."/>
            <person name="Mohapatra S."/>
            <person name="Nagrani S."/>
            <person name="Purkayastha A."/>
            <person name="Rajasimha H.K."/>
            <person name="Shallom J.M."/>
            <person name="Shallom S."/>
            <person name="Shukla M."/>
            <person name="Snyder E.E."/>
            <person name="Sobral B.W."/>
            <person name="Wattam A.R."/>
            <person name="Will R."/>
            <person name="Williams K."/>
            <person name="Yoo H."/>
            <person name="Bruce D."/>
            <person name="Detter C."/>
            <person name="Munk C."/>
            <person name="Brettin T.S."/>
        </authorList>
    </citation>
    <scope>NUCLEOTIDE SEQUENCE [LARGE SCALE GENOMIC DNA]</scope>
    <source>
        <strain>ATCC 23445 / NCTC 10510</strain>
    </source>
</reference>
<sequence length="175" mass="18769">MSIDDLKSKIPDFAKDVRLNLSSMASDETLTPQQKYGLFVACGIASRNADVRKALVAEAAGKVDASVIQAAKAAASIMGMNNVYYRFVHLASNKDYRTMPARLRMNVISNPGVDKVDFELWSLAVSAINGCGMCIDAHEDVLRKANVTAEAIQAAVRFASIIQSAAIALEAADTE</sequence>
<protein>
    <recommendedName>
        <fullName evidence="2">Alkyl hydroperoxide reductase AhpD</fullName>
        <ecNumber evidence="2">1.11.1.28</ecNumber>
    </recommendedName>
    <alternativeName>
        <fullName evidence="2">Alkylhydroperoxidase AhpD</fullName>
    </alternativeName>
</protein>
<dbReference type="EC" id="1.11.1.28" evidence="2"/>
<dbReference type="EMBL" id="CP000912">
    <property type="protein sequence ID" value="ABY39670.1"/>
    <property type="molecule type" value="Genomic_DNA"/>
</dbReference>
<dbReference type="RefSeq" id="WP_004682000.1">
    <property type="nucleotide sequence ID" value="NC_010167.1"/>
</dbReference>
<dbReference type="SMR" id="A9WZ04"/>
<dbReference type="KEGG" id="bmt:BSUIS_B0693"/>
<dbReference type="HOGENOM" id="CLU_105328_0_0_5"/>
<dbReference type="Proteomes" id="UP000008545">
    <property type="component" value="Chromosome II"/>
</dbReference>
<dbReference type="GO" id="GO:0008785">
    <property type="term" value="F:alkyl hydroperoxide reductase activity"/>
    <property type="evidence" value="ECO:0007669"/>
    <property type="project" value="UniProtKB-UniRule"/>
</dbReference>
<dbReference type="GO" id="GO:0015036">
    <property type="term" value="F:disulfide oxidoreductase activity"/>
    <property type="evidence" value="ECO:0007669"/>
    <property type="project" value="TreeGrafter"/>
</dbReference>
<dbReference type="GO" id="GO:0032843">
    <property type="term" value="F:hydroperoxide reductase activity"/>
    <property type="evidence" value="ECO:0007669"/>
    <property type="project" value="InterPro"/>
</dbReference>
<dbReference type="GO" id="GO:0051920">
    <property type="term" value="F:peroxiredoxin activity"/>
    <property type="evidence" value="ECO:0007669"/>
    <property type="project" value="InterPro"/>
</dbReference>
<dbReference type="GO" id="GO:0045454">
    <property type="term" value="P:cell redox homeostasis"/>
    <property type="evidence" value="ECO:0007669"/>
    <property type="project" value="TreeGrafter"/>
</dbReference>
<dbReference type="GO" id="GO:0006979">
    <property type="term" value="P:response to oxidative stress"/>
    <property type="evidence" value="ECO:0007669"/>
    <property type="project" value="InterPro"/>
</dbReference>
<dbReference type="Gene3D" id="1.20.1290.10">
    <property type="entry name" value="AhpD-like"/>
    <property type="match status" value="1"/>
</dbReference>
<dbReference type="HAMAP" id="MF_01676">
    <property type="entry name" value="AhpD"/>
    <property type="match status" value="1"/>
</dbReference>
<dbReference type="InterPro" id="IPR004674">
    <property type="entry name" value="AhpD"/>
</dbReference>
<dbReference type="InterPro" id="IPR029032">
    <property type="entry name" value="AhpD-like"/>
</dbReference>
<dbReference type="InterPro" id="IPR004675">
    <property type="entry name" value="AhpD_core"/>
</dbReference>
<dbReference type="InterPro" id="IPR003779">
    <property type="entry name" value="CMD-like"/>
</dbReference>
<dbReference type="NCBIfam" id="TIGR00777">
    <property type="entry name" value="ahpD"/>
    <property type="match status" value="1"/>
</dbReference>
<dbReference type="NCBIfam" id="TIGR00778">
    <property type="entry name" value="ahpD_dom"/>
    <property type="match status" value="1"/>
</dbReference>
<dbReference type="PANTHER" id="PTHR33930">
    <property type="entry name" value="ALKYL HYDROPEROXIDE REDUCTASE AHPD"/>
    <property type="match status" value="1"/>
</dbReference>
<dbReference type="PANTHER" id="PTHR33930:SF7">
    <property type="entry name" value="ALKYL HYDROPEROXIDE REDUCTASE AHPD"/>
    <property type="match status" value="1"/>
</dbReference>
<dbReference type="Pfam" id="PF02627">
    <property type="entry name" value="CMD"/>
    <property type="match status" value="1"/>
</dbReference>
<dbReference type="SUPFAM" id="SSF69118">
    <property type="entry name" value="AhpD-like"/>
    <property type="match status" value="1"/>
</dbReference>